<accession>Q11CP6</accession>
<sequence length="349" mass="37983">MKFLDQAKVYIRAGDGGAGAVSFRREKFIEFGGPDGGDGGRGGDVWIEAVEGLNTLIDYRYQQHFKAKPGIHGMGRNRTGAKGDDVVLKVPVGTQVYEEDNETLICDLTEVGQRFLLLKGGNGGFGNQHFKSSTNQAPRRANPGLPGEELWIWLRLKLIADAGLIGLPNAGKSTFLATVTAAKPKIADYPFTTLHPNLGVVRIDAREFVLADIPGLIEGAHMGVGIGDRFLGHVERTGVLLHLISAREEDVAATYKTVRRELKAYGHGLSEKPEVVALSQIDLLDEEERREKLAALKKAARRAALPLSSATGEGVQDVLRALMRVVQAAREEERAAETANERWQKQADS</sequence>
<name>OBG_CHESB</name>
<proteinExistence type="inferred from homology"/>
<keyword id="KW-0963">Cytoplasm</keyword>
<keyword id="KW-0342">GTP-binding</keyword>
<keyword id="KW-0378">Hydrolase</keyword>
<keyword id="KW-0460">Magnesium</keyword>
<keyword id="KW-0479">Metal-binding</keyword>
<keyword id="KW-0547">Nucleotide-binding</keyword>
<dbReference type="EC" id="3.6.5.-" evidence="1"/>
<dbReference type="EMBL" id="CP000390">
    <property type="protein sequence ID" value="ABG64829.1"/>
    <property type="molecule type" value="Genomic_DNA"/>
</dbReference>
<dbReference type="SMR" id="Q11CP6"/>
<dbReference type="STRING" id="266779.Meso_3458"/>
<dbReference type="KEGG" id="mes:Meso_3458"/>
<dbReference type="eggNOG" id="COG0536">
    <property type="taxonomic scope" value="Bacteria"/>
</dbReference>
<dbReference type="HOGENOM" id="CLU_011747_2_0_5"/>
<dbReference type="OrthoDB" id="9807318at2"/>
<dbReference type="GO" id="GO:0005737">
    <property type="term" value="C:cytoplasm"/>
    <property type="evidence" value="ECO:0007669"/>
    <property type="project" value="UniProtKB-SubCell"/>
</dbReference>
<dbReference type="GO" id="GO:0005525">
    <property type="term" value="F:GTP binding"/>
    <property type="evidence" value="ECO:0007669"/>
    <property type="project" value="UniProtKB-UniRule"/>
</dbReference>
<dbReference type="GO" id="GO:0003924">
    <property type="term" value="F:GTPase activity"/>
    <property type="evidence" value="ECO:0007669"/>
    <property type="project" value="UniProtKB-UniRule"/>
</dbReference>
<dbReference type="GO" id="GO:0000287">
    <property type="term" value="F:magnesium ion binding"/>
    <property type="evidence" value="ECO:0007669"/>
    <property type="project" value="InterPro"/>
</dbReference>
<dbReference type="GO" id="GO:0042254">
    <property type="term" value="P:ribosome biogenesis"/>
    <property type="evidence" value="ECO:0007669"/>
    <property type="project" value="UniProtKB-UniRule"/>
</dbReference>
<dbReference type="CDD" id="cd01898">
    <property type="entry name" value="Obg"/>
    <property type="match status" value="1"/>
</dbReference>
<dbReference type="FunFam" id="2.70.210.12:FF:000001">
    <property type="entry name" value="GTPase Obg"/>
    <property type="match status" value="1"/>
</dbReference>
<dbReference type="Gene3D" id="2.70.210.12">
    <property type="entry name" value="GTP1/OBG domain"/>
    <property type="match status" value="1"/>
</dbReference>
<dbReference type="Gene3D" id="3.40.50.300">
    <property type="entry name" value="P-loop containing nucleotide triphosphate hydrolases"/>
    <property type="match status" value="1"/>
</dbReference>
<dbReference type="HAMAP" id="MF_01454">
    <property type="entry name" value="GTPase_Obg"/>
    <property type="match status" value="1"/>
</dbReference>
<dbReference type="InterPro" id="IPR031167">
    <property type="entry name" value="G_OBG"/>
</dbReference>
<dbReference type="InterPro" id="IPR006073">
    <property type="entry name" value="GTP-bd"/>
</dbReference>
<dbReference type="InterPro" id="IPR014100">
    <property type="entry name" value="GTP-bd_Obg/CgtA"/>
</dbReference>
<dbReference type="InterPro" id="IPR006074">
    <property type="entry name" value="GTP1-OBG_CS"/>
</dbReference>
<dbReference type="InterPro" id="IPR006169">
    <property type="entry name" value="GTP1_OBG_dom"/>
</dbReference>
<dbReference type="InterPro" id="IPR036726">
    <property type="entry name" value="GTP1_OBG_dom_sf"/>
</dbReference>
<dbReference type="InterPro" id="IPR045086">
    <property type="entry name" value="OBG_GTPase"/>
</dbReference>
<dbReference type="InterPro" id="IPR027417">
    <property type="entry name" value="P-loop_NTPase"/>
</dbReference>
<dbReference type="NCBIfam" id="TIGR02729">
    <property type="entry name" value="Obg_CgtA"/>
    <property type="match status" value="1"/>
</dbReference>
<dbReference type="NCBIfam" id="NF008955">
    <property type="entry name" value="PRK12297.1"/>
    <property type="match status" value="1"/>
</dbReference>
<dbReference type="NCBIfam" id="NF008956">
    <property type="entry name" value="PRK12299.1"/>
    <property type="match status" value="1"/>
</dbReference>
<dbReference type="PANTHER" id="PTHR11702">
    <property type="entry name" value="DEVELOPMENTALLY REGULATED GTP-BINDING PROTEIN-RELATED"/>
    <property type="match status" value="1"/>
</dbReference>
<dbReference type="PANTHER" id="PTHR11702:SF31">
    <property type="entry name" value="MITOCHONDRIAL RIBOSOME-ASSOCIATED GTPASE 2"/>
    <property type="match status" value="1"/>
</dbReference>
<dbReference type="Pfam" id="PF01018">
    <property type="entry name" value="GTP1_OBG"/>
    <property type="match status" value="1"/>
</dbReference>
<dbReference type="Pfam" id="PF01926">
    <property type="entry name" value="MMR_HSR1"/>
    <property type="match status" value="1"/>
</dbReference>
<dbReference type="PIRSF" id="PIRSF002401">
    <property type="entry name" value="GTP_bd_Obg/CgtA"/>
    <property type="match status" value="1"/>
</dbReference>
<dbReference type="PRINTS" id="PR00326">
    <property type="entry name" value="GTP1OBG"/>
</dbReference>
<dbReference type="SUPFAM" id="SSF82051">
    <property type="entry name" value="Obg GTP-binding protein N-terminal domain"/>
    <property type="match status" value="1"/>
</dbReference>
<dbReference type="SUPFAM" id="SSF52540">
    <property type="entry name" value="P-loop containing nucleoside triphosphate hydrolases"/>
    <property type="match status" value="1"/>
</dbReference>
<dbReference type="PROSITE" id="PS51710">
    <property type="entry name" value="G_OBG"/>
    <property type="match status" value="1"/>
</dbReference>
<dbReference type="PROSITE" id="PS00905">
    <property type="entry name" value="GTP1_OBG"/>
    <property type="match status" value="1"/>
</dbReference>
<dbReference type="PROSITE" id="PS51883">
    <property type="entry name" value="OBG"/>
    <property type="match status" value="1"/>
</dbReference>
<evidence type="ECO:0000255" key="1">
    <source>
        <dbReference type="HAMAP-Rule" id="MF_01454"/>
    </source>
</evidence>
<evidence type="ECO:0000255" key="2">
    <source>
        <dbReference type="PROSITE-ProRule" id="PRU01231"/>
    </source>
</evidence>
<organism>
    <name type="scientific">Chelativorans sp. (strain BNC1)</name>
    <dbReference type="NCBI Taxonomy" id="266779"/>
    <lineage>
        <taxon>Bacteria</taxon>
        <taxon>Pseudomonadati</taxon>
        <taxon>Pseudomonadota</taxon>
        <taxon>Alphaproteobacteria</taxon>
        <taxon>Hyphomicrobiales</taxon>
        <taxon>Phyllobacteriaceae</taxon>
        <taxon>Chelativorans</taxon>
    </lineage>
</organism>
<protein>
    <recommendedName>
        <fullName evidence="1">GTPase Obg</fullName>
        <ecNumber evidence="1">3.6.5.-</ecNumber>
    </recommendedName>
    <alternativeName>
        <fullName evidence="1">GTP-binding protein Obg</fullName>
    </alternativeName>
</protein>
<comment type="function">
    <text evidence="1">An essential GTPase which binds GTP, GDP and possibly (p)ppGpp with moderate affinity, with high nucleotide exchange rates and a fairly low GTP hydrolysis rate. Plays a role in control of the cell cycle, stress response, ribosome biogenesis and in those bacteria that undergo differentiation, in morphogenesis control.</text>
</comment>
<comment type="cofactor">
    <cofactor evidence="1">
        <name>Mg(2+)</name>
        <dbReference type="ChEBI" id="CHEBI:18420"/>
    </cofactor>
</comment>
<comment type="subunit">
    <text evidence="1">Monomer.</text>
</comment>
<comment type="subcellular location">
    <subcellularLocation>
        <location evidence="1">Cytoplasm</location>
    </subcellularLocation>
</comment>
<comment type="similarity">
    <text evidence="1">Belongs to the TRAFAC class OBG-HflX-like GTPase superfamily. OBG GTPase family.</text>
</comment>
<feature type="chain" id="PRO_0000386035" description="GTPase Obg">
    <location>
        <begin position="1"/>
        <end position="349"/>
    </location>
</feature>
<feature type="domain" description="Obg" evidence="2">
    <location>
        <begin position="1"/>
        <end position="159"/>
    </location>
</feature>
<feature type="domain" description="OBG-type G" evidence="1">
    <location>
        <begin position="160"/>
        <end position="327"/>
    </location>
</feature>
<feature type="binding site" evidence="1">
    <location>
        <begin position="166"/>
        <end position="173"/>
    </location>
    <ligand>
        <name>GTP</name>
        <dbReference type="ChEBI" id="CHEBI:37565"/>
    </ligand>
</feature>
<feature type="binding site" evidence="1">
    <location>
        <position position="173"/>
    </location>
    <ligand>
        <name>Mg(2+)</name>
        <dbReference type="ChEBI" id="CHEBI:18420"/>
    </ligand>
</feature>
<feature type="binding site" evidence="1">
    <location>
        <begin position="191"/>
        <end position="195"/>
    </location>
    <ligand>
        <name>GTP</name>
        <dbReference type="ChEBI" id="CHEBI:37565"/>
    </ligand>
</feature>
<feature type="binding site" evidence="1">
    <location>
        <position position="193"/>
    </location>
    <ligand>
        <name>Mg(2+)</name>
        <dbReference type="ChEBI" id="CHEBI:18420"/>
    </ligand>
</feature>
<feature type="binding site" evidence="1">
    <location>
        <begin position="212"/>
        <end position="215"/>
    </location>
    <ligand>
        <name>GTP</name>
        <dbReference type="ChEBI" id="CHEBI:37565"/>
    </ligand>
</feature>
<feature type="binding site" evidence="1">
    <location>
        <begin position="279"/>
        <end position="282"/>
    </location>
    <ligand>
        <name>GTP</name>
        <dbReference type="ChEBI" id="CHEBI:37565"/>
    </ligand>
</feature>
<feature type="binding site" evidence="1">
    <location>
        <begin position="308"/>
        <end position="310"/>
    </location>
    <ligand>
        <name>GTP</name>
        <dbReference type="ChEBI" id="CHEBI:37565"/>
    </ligand>
</feature>
<gene>
    <name evidence="1" type="primary">obg</name>
    <name type="ordered locus">Meso_3458</name>
</gene>
<reference key="1">
    <citation type="submission" date="2006-06" db="EMBL/GenBank/DDBJ databases">
        <title>Complete sequence of chromosome of Mesorhizobium sp. BNC1.</title>
        <authorList>
            <consortium name="US DOE Joint Genome Institute"/>
            <person name="Copeland A."/>
            <person name="Lucas S."/>
            <person name="Lapidus A."/>
            <person name="Barry K."/>
            <person name="Detter J.C."/>
            <person name="Glavina del Rio T."/>
            <person name="Hammon N."/>
            <person name="Israni S."/>
            <person name="Dalin E."/>
            <person name="Tice H."/>
            <person name="Pitluck S."/>
            <person name="Chertkov O."/>
            <person name="Brettin T."/>
            <person name="Bruce D."/>
            <person name="Han C."/>
            <person name="Tapia R."/>
            <person name="Gilna P."/>
            <person name="Schmutz J."/>
            <person name="Larimer F."/>
            <person name="Land M."/>
            <person name="Hauser L."/>
            <person name="Kyrpides N."/>
            <person name="Mikhailova N."/>
            <person name="Richardson P."/>
        </authorList>
    </citation>
    <scope>NUCLEOTIDE SEQUENCE [LARGE SCALE GENOMIC DNA]</scope>
    <source>
        <strain>BNC1</strain>
    </source>
</reference>